<proteinExistence type="evidence at protein level"/>
<evidence type="ECO:0000250" key="1">
    <source>
        <dbReference type="UniProtKB" id="P30288"/>
    </source>
</evidence>
<evidence type="ECO:0000255" key="2"/>
<evidence type="ECO:0000269" key="3">
    <source>
    </source>
</evidence>
<evidence type="ECO:0000305" key="4"/>
<evidence type="ECO:0000305" key="5">
    <source>
    </source>
</evidence>
<dbReference type="EMBL" id="AF015664">
    <property type="protein sequence ID" value="AAC26168.1"/>
    <property type="molecule type" value="mRNA"/>
</dbReference>
<dbReference type="PIR" id="B44336">
    <property type="entry name" value="B44336"/>
</dbReference>
<dbReference type="ArachnoServer" id="AS000258">
    <property type="toxin name" value="omega-ctenitoxin-Pn1a"/>
</dbReference>
<dbReference type="GO" id="GO:0005576">
    <property type="term" value="C:extracellular region"/>
    <property type="evidence" value="ECO:0007669"/>
    <property type="project" value="UniProtKB-SubCell"/>
</dbReference>
<dbReference type="GO" id="GO:0005246">
    <property type="term" value="F:calcium channel regulator activity"/>
    <property type="evidence" value="ECO:0007669"/>
    <property type="project" value="UniProtKB-KW"/>
</dbReference>
<dbReference type="GO" id="GO:0008200">
    <property type="term" value="F:ion channel inhibitor activity"/>
    <property type="evidence" value="ECO:0007669"/>
    <property type="project" value="InterPro"/>
</dbReference>
<dbReference type="GO" id="GO:0090729">
    <property type="term" value="F:toxin activity"/>
    <property type="evidence" value="ECO:0007669"/>
    <property type="project" value="UniProtKB-KW"/>
</dbReference>
<dbReference type="CDD" id="cd12960">
    <property type="entry name" value="Spider_toxin"/>
    <property type="match status" value="1"/>
</dbReference>
<dbReference type="Gene3D" id="4.10.40.10">
    <property type="match status" value="1"/>
</dbReference>
<dbReference type="InterPro" id="IPR004169">
    <property type="entry name" value="Spidertoxin"/>
</dbReference>
<dbReference type="Pfam" id="PF02819">
    <property type="entry name" value="Toxin_9"/>
    <property type="match status" value="1"/>
</dbReference>
<dbReference type="SUPFAM" id="SSF57059">
    <property type="entry name" value="omega toxin-like"/>
    <property type="match status" value="1"/>
</dbReference>
<sequence>MWLKIQVFLLAITLITLGIQAEPNSSPNNPLIEEEARACAGLYKKCGKGASPCCEDRPCKCDLAMGNCICKKKFIEFFGGGK</sequence>
<feature type="signal peptide" evidence="2">
    <location>
        <begin position="1"/>
        <end position="21"/>
    </location>
</feature>
<feature type="propeptide" id="PRO_0000035520" evidence="5">
    <location>
        <begin position="22"/>
        <end position="37"/>
    </location>
</feature>
<feature type="chain" id="PRO_0000035521" description="Omega-ctenitoxin-Pn1a" evidence="3">
    <location>
        <begin position="38"/>
        <end position="71"/>
    </location>
</feature>
<feature type="propeptide" id="PRO_0000035522">
    <location>
        <begin position="72"/>
        <end position="82"/>
    </location>
</feature>
<feature type="disulfide bond" evidence="1">
    <location>
        <begin position="39"/>
        <end position="54"/>
    </location>
</feature>
<feature type="disulfide bond" evidence="1">
    <location>
        <begin position="46"/>
        <end position="59"/>
    </location>
</feature>
<feature type="disulfide bond" evidence="1">
    <location>
        <begin position="53"/>
        <end position="70"/>
    </location>
</feature>
<feature type="disulfide bond" evidence="1">
    <location>
        <begin position="61"/>
        <end position="68"/>
    </location>
</feature>
<comment type="function">
    <text>Antagonist of L-type calcium channels (Cav1/CACNA1). Induces immediate clockwise gyration and flaccid paralysis after 6 hours at dose levels of 5 ug per mouse.</text>
</comment>
<comment type="subcellular location">
    <subcellularLocation>
        <location evidence="3">Secreted</location>
    </subcellularLocation>
</comment>
<comment type="tissue specificity">
    <text evidence="5">Expressed by the venom gland.</text>
</comment>
<comment type="domain">
    <text evidence="1">The presence of a 'disulfide through disulfide knot' structurally defines this protein as a knottin.</text>
</comment>
<comment type="similarity">
    <text evidence="4">Belongs to the neurotoxin 02 (plectoxin) family.</text>
</comment>
<keyword id="KW-0108">Calcium channel impairing toxin</keyword>
<keyword id="KW-0903">Direct protein sequencing</keyword>
<keyword id="KW-1015">Disulfide bond</keyword>
<keyword id="KW-0872">Ion channel impairing toxin</keyword>
<keyword id="KW-0960">Knottin</keyword>
<keyword id="KW-0528">Neurotoxin</keyword>
<keyword id="KW-0964">Secreted</keyword>
<keyword id="KW-0732">Signal</keyword>
<keyword id="KW-0800">Toxin</keyword>
<keyword id="KW-1218">Voltage-gated calcium channel impairing toxin</keyword>
<accession>O76201</accession>
<reference key="1">
    <citation type="journal article" date="1998" name="Toxicon">
        <title>Cloning, cDNA sequence analysis and patch clamp studies of a toxin from the venom of the armed spider (Phoneutria nigriventer).</title>
        <authorList>
            <person name="Kalapothakis E."/>
            <person name="Penaforte C.L."/>
            <person name="Leao R.M."/>
            <person name="Cruz J.S."/>
            <person name="Prado V.F."/>
            <person name="Cordeiro M.N."/>
            <person name="Diniz C.R."/>
            <person name="Romano-Silva M.A."/>
            <person name="Prado M.A.M."/>
            <person name="Gomez M.V."/>
            <person name="Beirao P.S.L."/>
        </authorList>
    </citation>
    <scope>NUCLEOTIDE SEQUENCE [MRNA]</scope>
    <source>
        <tissue>Venom gland</tissue>
    </source>
</reference>
<reference key="2">
    <citation type="journal article" date="1993" name="Toxicon">
        <title>Purification and amino acid sequences of six Tx3 type neurotoxins from the venom of the Brazilian 'armed' spider Phoneutria nigriventer (Keys).</title>
        <authorList>
            <person name="Cordeiro M.N."/>
            <person name="De Figueiredo S.G."/>
            <person name="Valentim A.D.C."/>
            <person name="Diniz C.R."/>
            <person name="von Eickstedt V.R.D."/>
            <person name="Gilroy J."/>
            <person name="Richardson M."/>
        </authorList>
    </citation>
    <scope>PROTEIN SEQUENCE OF 38-71</scope>
    <scope>SUBCELLULAR LOCATION</scope>
    <source>
        <tissue>Venom</tissue>
    </source>
</reference>
<name>TX20B_PHONI</name>
<protein>
    <recommendedName>
        <fullName evidence="4">Omega-ctenitoxin-Pn1a</fullName>
        <shortName evidence="4">Omega-CNTX-Pn1a</shortName>
    </recommendedName>
    <alternativeName>
        <fullName>Neurotoxin Tx3-2</fullName>
    </alternativeName>
    <alternativeName>
        <fullName>PNTx3-2</fullName>
    </alternativeName>
</protein>
<organism>
    <name type="scientific">Phoneutria nigriventer</name>
    <name type="common">Brazilian armed spider</name>
    <name type="synonym">Ctenus nigriventer</name>
    <dbReference type="NCBI Taxonomy" id="6918"/>
    <lineage>
        <taxon>Eukaryota</taxon>
        <taxon>Metazoa</taxon>
        <taxon>Ecdysozoa</taxon>
        <taxon>Arthropoda</taxon>
        <taxon>Chelicerata</taxon>
        <taxon>Arachnida</taxon>
        <taxon>Araneae</taxon>
        <taxon>Araneomorphae</taxon>
        <taxon>Entelegynae</taxon>
        <taxon>Lycosoidea</taxon>
        <taxon>Ctenidae</taxon>
        <taxon>Phoneutria</taxon>
    </lineage>
</organism>